<comment type="function">
    <text evidence="1">Specifically methylates position 2 of adenine 2503 in 23S rRNA and position 2 of adenine 37 in tRNAs. m2A2503 modification seems to play a crucial role in the proofreading step occurring at the peptidyl transferase center and thus would serve to optimize ribosomal fidelity.</text>
</comment>
<comment type="catalytic activity">
    <reaction evidence="1">
        <text>adenosine(2503) in 23S rRNA + 2 reduced [2Fe-2S]-[ferredoxin] + 2 S-adenosyl-L-methionine = 2-methyladenosine(2503) in 23S rRNA + 5'-deoxyadenosine + L-methionine + 2 oxidized [2Fe-2S]-[ferredoxin] + S-adenosyl-L-homocysteine</text>
        <dbReference type="Rhea" id="RHEA:42916"/>
        <dbReference type="Rhea" id="RHEA-COMP:10000"/>
        <dbReference type="Rhea" id="RHEA-COMP:10001"/>
        <dbReference type="Rhea" id="RHEA-COMP:10152"/>
        <dbReference type="Rhea" id="RHEA-COMP:10282"/>
        <dbReference type="ChEBI" id="CHEBI:17319"/>
        <dbReference type="ChEBI" id="CHEBI:33737"/>
        <dbReference type="ChEBI" id="CHEBI:33738"/>
        <dbReference type="ChEBI" id="CHEBI:57844"/>
        <dbReference type="ChEBI" id="CHEBI:57856"/>
        <dbReference type="ChEBI" id="CHEBI:59789"/>
        <dbReference type="ChEBI" id="CHEBI:74411"/>
        <dbReference type="ChEBI" id="CHEBI:74497"/>
        <dbReference type="EC" id="2.1.1.192"/>
    </reaction>
</comment>
<comment type="catalytic activity">
    <reaction evidence="1">
        <text>adenosine(37) in tRNA + 2 reduced [2Fe-2S]-[ferredoxin] + 2 S-adenosyl-L-methionine = 2-methyladenosine(37) in tRNA + 5'-deoxyadenosine + L-methionine + 2 oxidized [2Fe-2S]-[ferredoxin] + S-adenosyl-L-homocysteine</text>
        <dbReference type="Rhea" id="RHEA:43332"/>
        <dbReference type="Rhea" id="RHEA-COMP:10000"/>
        <dbReference type="Rhea" id="RHEA-COMP:10001"/>
        <dbReference type="Rhea" id="RHEA-COMP:10162"/>
        <dbReference type="Rhea" id="RHEA-COMP:10485"/>
        <dbReference type="ChEBI" id="CHEBI:17319"/>
        <dbReference type="ChEBI" id="CHEBI:33737"/>
        <dbReference type="ChEBI" id="CHEBI:33738"/>
        <dbReference type="ChEBI" id="CHEBI:57844"/>
        <dbReference type="ChEBI" id="CHEBI:57856"/>
        <dbReference type="ChEBI" id="CHEBI:59789"/>
        <dbReference type="ChEBI" id="CHEBI:74411"/>
        <dbReference type="ChEBI" id="CHEBI:74497"/>
        <dbReference type="EC" id="2.1.1.192"/>
    </reaction>
</comment>
<comment type="cofactor">
    <cofactor evidence="1">
        <name>[4Fe-4S] cluster</name>
        <dbReference type="ChEBI" id="CHEBI:49883"/>
    </cofactor>
    <text evidence="1">Binds 1 [4Fe-4S] cluster. The cluster is coordinated with 3 cysteines and an exchangeable S-adenosyl-L-methionine.</text>
</comment>
<comment type="subcellular location">
    <subcellularLocation>
        <location evidence="1">Cytoplasm</location>
    </subcellularLocation>
</comment>
<comment type="miscellaneous">
    <text evidence="1">Reaction proceeds by a ping-pong mechanism involving intermediate methylation of a conserved cysteine residue.</text>
</comment>
<comment type="similarity">
    <text evidence="1">Belongs to the radical SAM superfamily. RlmN family.</text>
</comment>
<evidence type="ECO:0000255" key="1">
    <source>
        <dbReference type="HAMAP-Rule" id="MF_01849"/>
    </source>
</evidence>
<evidence type="ECO:0000255" key="2">
    <source>
        <dbReference type="PROSITE-ProRule" id="PRU01266"/>
    </source>
</evidence>
<keyword id="KW-0004">4Fe-4S</keyword>
<keyword id="KW-0963">Cytoplasm</keyword>
<keyword id="KW-1015">Disulfide bond</keyword>
<keyword id="KW-0408">Iron</keyword>
<keyword id="KW-0411">Iron-sulfur</keyword>
<keyword id="KW-0479">Metal-binding</keyword>
<keyword id="KW-0489">Methyltransferase</keyword>
<keyword id="KW-1185">Reference proteome</keyword>
<keyword id="KW-0698">rRNA processing</keyword>
<keyword id="KW-0949">S-adenosyl-L-methionine</keyword>
<keyword id="KW-0808">Transferase</keyword>
<keyword id="KW-0819">tRNA processing</keyword>
<gene>
    <name evidence="1" type="primary">rlmN</name>
    <name type="ordered locus">Mmc1_2993</name>
</gene>
<protein>
    <recommendedName>
        <fullName evidence="1">Dual-specificity RNA methyltransferase RlmN</fullName>
        <ecNumber evidence="1">2.1.1.192</ecNumber>
    </recommendedName>
    <alternativeName>
        <fullName evidence="1">23S rRNA (adenine(2503)-C(2))-methyltransferase</fullName>
    </alternativeName>
    <alternativeName>
        <fullName evidence="1">23S rRNA m2A2503 methyltransferase</fullName>
    </alternativeName>
    <alternativeName>
        <fullName evidence="1">Ribosomal RNA large subunit methyltransferase N</fullName>
    </alternativeName>
    <alternativeName>
        <fullName evidence="1">tRNA (adenine(37)-C(2))-methyltransferase</fullName>
    </alternativeName>
    <alternativeName>
        <fullName evidence="1">tRNA m2A37 methyltransferase</fullName>
    </alternativeName>
</protein>
<organism>
    <name type="scientific">Magnetococcus marinus (strain ATCC BAA-1437 / JCM 17883 / MC-1)</name>
    <dbReference type="NCBI Taxonomy" id="156889"/>
    <lineage>
        <taxon>Bacteria</taxon>
        <taxon>Pseudomonadati</taxon>
        <taxon>Pseudomonadota</taxon>
        <taxon>Alphaproteobacteria</taxon>
        <taxon>Magnetococcales</taxon>
        <taxon>Magnetococcaceae</taxon>
        <taxon>Magnetococcus</taxon>
    </lineage>
</organism>
<name>RLMN_MAGMM</name>
<dbReference type="EC" id="2.1.1.192" evidence="1"/>
<dbReference type="EMBL" id="CP000471">
    <property type="protein sequence ID" value="ABK45484.1"/>
    <property type="molecule type" value="Genomic_DNA"/>
</dbReference>
<dbReference type="RefSeq" id="WP_011714548.1">
    <property type="nucleotide sequence ID" value="NC_008576.1"/>
</dbReference>
<dbReference type="SMR" id="A0LBZ1"/>
<dbReference type="STRING" id="156889.Mmc1_2993"/>
<dbReference type="KEGG" id="mgm:Mmc1_2993"/>
<dbReference type="eggNOG" id="COG0820">
    <property type="taxonomic scope" value="Bacteria"/>
</dbReference>
<dbReference type="HOGENOM" id="CLU_029101_0_0_5"/>
<dbReference type="OrthoDB" id="9793973at2"/>
<dbReference type="Proteomes" id="UP000002586">
    <property type="component" value="Chromosome"/>
</dbReference>
<dbReference type="GO" id="GO:0005737">
    <property type="term" value="C:cytoplasm"/>
    <property type="evidence" value="ECO:0007669"/>
    <property type="project" value="UniProtKB-SubCell"/>
</dbReference>
<dbReference type="GO" id="GO:0051539">
    <property type="term" value="F:4 iron, 4 sulfur cluster binding"/>
    <property type="evidence" value="ECO:0007669"/>
    <property type="project" value="UniProtKB-UniRule"/>
</dbReference>
<dbReference type="GO" id="GO:0046872">
    <property type="term" value="F:metal ion binding"/>
    <property type="evidence" value="ECO:0007669"/>
    <property type="project" value="UniProtKB-KW"/>
</dbReference>
<dbReference type="GO" id="GO:0070040">
    <property type="term" value="F:rRNA (adenine(2503)-C2-)-methyltransferase activity"/>
    <property type="evidence" value="ECO:0007669"/>
    <property type="project" value="UniProtKB-UniRule"/>
</dbReference>
<dbReference type="GO" id="GO:0019843">
    <property type="term" value="F:rRNA binding"/>
    <property type="evidence" value="ECO:0007669"/>
    <property type="project" value="UniProtKB-UniRule"/>
</dbReference>
<dbReference type="GO" id="GO:0002935">
    <property type="term" value="F:tRNA (adenine(37)-C2)-methyltransferase activity"/>
    <property type="evidence" value="ECO:0007669"/>
    <property type="project" value="UniProtKB-UniRule"/>
</dbReference>
<dbReference type="GO" id="GO:0000049">
    <property type="term" value="F:tRNA binding"/>
    <property type="evidence" value="ECO:0007669"/>
    <property type="project" value="UniProtKB-UniRule"/>
</dbReference>
<dbReference type="GO" id="GO:0070475">
    <property type="term" value="P:rRNA base methylation"/>
    <property type="evidence" value="ECO:0007669"/>
    <property type="project" value="UniProtKB-UniRule"/>
</dbReference>
<dbReference type="GO" id="GO:0030488">
    <property type="term" value="P:tRNA methylation"/>
    <property type="evidence" value="ECO:0007669"/>
    <property type="project" value="UniProtKB-UniRule"/>
</dbReference>
<dbReference type="CDD" id="cd01335">
    <property type="entry name" value="Radical_SAM"/>
    <property type="match status" value="1"/>
</dbReference>
<dbReference type="FunFam" id="3.20.20.70:FF:000014">
    <property type="entry name" value="Probable dual-specificity RNA methyltransferase RlmN"/>
    <property type="match status" value="1"/>
</dbReference>
<dbReference type="Gene3D" id="1.10.150.530">
    <property type="match status" value="1"/>
</dbReference>
<dbReference type="Gene3D" id="3.20.20.70">
    <property type="entry name" value="Aldolase class I"/>
    <property type="match status" value="1"/>
</dbReference>
<dbReference type="HAMAP" id="MF_01849">
    <property type="entry name" value="RNA_methyltr_RlmN"/>
    <property type="match status" value="1"/>
</dbReference>
<dbReference type="InterPro" id="IPR013785">
    <property type="entry name" value="Aldolase_TIM"/>
</dbReference>
<dbReference type="InterPro" id="IPR040072">
    <property type="entry name" value="Methyltransferase_A"/>
</dbReference>
<dbReference type="InterPro" id="IPR048641">
    <property type="entry name" value="RlmN_N"/>
</dbReference>
<dbReference type="InterPro" id="IPR027492">
    <property type="entry name" value="RNA_MTrfase_RlmN"/>
</dbReference>
<dbReference type="InterPro" id="IPR004383">
    <property type="entry name" value="rRNA_lsu_MTrfase_RlmN/Cfr"/>
</dbReference>
<dbReference type="InterPro" id="IPR007197">
    <property type="entry name" value="rSAM"/>
</dbReference>
<dbReference type="NCBIfam" id="TIGR00048">
    <property type="entry name" value="rRNA_mod_RlmN"/>
    <property type="match status" value="1"/>
</dbReference>
<dbReference type="PANTHER" id="PTHR30544">
    <property type="entry name" value="23S RRNA METHYLTRANSFERASE"/>
    <property type="match status" value="1"/>
</dbReference>
<dbReference type="PANTHER" id="PTHR30544:SF5">
    <property type="entry name" value="RADICAL SAM CORE DOMAIN-CONTAINING PROTEIN"/>
    <property type="match status" value="1"/>
</dbReference>
<dbReference type="Pfam" id="PF04055">
    <property type="entry name" value="Radical_SAM"/>
    <property type="match status" value="1"/>
</dbReference>
<dbReference type="Pfam" id="PF21016">
    <property type="entry name" value="RlmN_N"/>
    <property type="match status" value="1"/>
</dbReference>
<dbReference type="PIRSF" id="PIRSF006004">
    <property type="entry name" value="CHP00048"/>
    <property type="match status" value="1"/>
</dbReference>
<dbReference type="SFLD" id="SFLDF00275">
    <property type="entry name" value="adenosine_C2_methyltransferase"/>
    <property type="match status" value="1"/>
</dbReference>
<dbReference type="SFLD" id="SFLDS00029">
    <property type="entry name" value="Radical_SAM"/>
    <property type="match status" value="1"/>
</dbReference>
<dbReference type="SUPFAM" id="SSF102114">
    <property type="entry name" value="Radical SAM enzymes"/>
    <property type="match status" value="1"/>
</dbReference>
<dbReference type="PROSITE" id="PS51918">
    <property type="entry name" value="RADICAL_SAM"/>
    <property type="match status" value="1"/>
</dbReference>
<sequence length="356" mass="39719">MHTPLLDLTGLTREALTSLVVEQLGEKPFRARQLWSWLHVKLAQHLDEMSDLSIDFRRKLSALSTPLRPEVSTHQISRDGTEKWLLRLSDGQQIETVYIPEDERGTLCISSQVGCTLSCPFCHTGAQGFARNLTPSEIVQQVLFARRTLAARDKRVTNIVLMGMGEPLYNYEAVRDAVLILLDDSGLAFGTRKVTLSTAGLLPKMEQAGRELGVNLAISLHAVRDTLRDELVPLNKKYNLQALRAATLRYPLKSGRRVTWEYVMLHGVNDSEDDARLFVSFLKDIPSKINLIPFNPWPGVPYQSSSMTRIAAFQKILYQAGFVTVIRDRRGEDIDAACGQLKGAVQGARPRPPGAS</sequence>
<reference key="1">
    <citation type="journal article" date="2009" name="Appl. Environ. Microbiol.">
        <title>Complete genome sequence of the chemolithoautotrophic marine magnetotactic coccus strain MC-1.</title>
        <authorList>
            <person name="Schubbe S."/>
            <person name="Williams T.J."/>
            <person name="Xie G."/>
            <person name="Kiss H.E."/>
            <person name="Brettin T.S."/>
            <person name="Martinez D."/>
            <person name="Ross C.A."/>
            <person name="Schuler D."/>
            <person name="Cox B.L."/>
            <person name="Nealson K.H."/>
            <person name="Bazylinski D.A."/>
        </authorList>
    </citation>
    <scope>NUCLEOTIDE SEQUENCE [LARGE SCALE GENOMIC DNA]</scope>
    <source>
        <strain>ATCC BAA-1437 / JCM 17883 / MC-1</strain>
    </source>
</reference>
<feature type="chain" id="PRO_0000350243" description="Dual-specificity RNA methyltransferase RlmN">
    <location>
        <begin position="1"/>
        <end position="356"/>
    </location>
</feature>
<feature type="domain" description="Radical SAM core" evidence="2">
    <location>
        <begin position="101"/>
        <end position="332"/>
    </location>
</feature>
<feature type="active site" description="Proton acceptor" evidence="1">
    <location>
        <position position="95"/>
    </location>
</feature>
<feature type="active site" description="S-methylcysteine intermediate" evidence="1">
    <location>
        <position position="338"/>
    </location>
</feature>
<feature type="binding site" evidence="1">
    <location>
        <position position="115"/>
    </location>
    <ligand>
        <name>[4Fe-4S] cluster</name>
        <dbReference type="ChEBI" id="CHEBI:49883"/>
        <note>4Fe-4S-S-AdoMet</note>
    </ligand>
</feature>
<feature type="binding site" evidence="1">
    <location>
        <position position="119"/>
    </location>
    <ligand>
        <name>[4Fe-4S] cluster</name>
        <dbReference type="ChEBI" id="CHEBI:49883"/>
        <note>4Fe-4S-S-AdoMet</note>
    </ligand>
</feature>
<feature type="binding site" evidence="1">
    <location>
        <position position="122"/>
    </location>
    <ligand>
        <name>[4Fe-4S] cluster</name>
        <dbReference type="ChEBI" id="CHEBI:49883"/>
        <note>4Fe-4S-S-AdoMet</note>
    </ligand>
</feature>
<feature type="binding site" evidence="1">
    <location>
        <begin position="165"/>
        <end position="166"/>
    </location>
    <ligand>
        <name>S-adenosyl-L-methionine</name>
        <dbReference type="ChEBI" id="CHEBI:59789"/>
    </ligand>
</feature>
<feature type="binding site" evidence="1">
    <location>
        <position position="197"/>
    </location>
    <ligand>
        <name>S-adenosyl-L-methionine</name>
        <dbReference type="ChEBI" id="CHEBI:59789"/>
    </ligand>
</feature>
<feature type="binding site" evidence="1">
    <location>
        <begin position="219"/>
        <end position="221"/>
    </location>
    <ligand>
        <name>S-adenosyl-L-methionine</name>
        <dbReference type="ChEBI" id="CHEBI:59789"/>
    </ligand>
</feature>
<feature type="binding site" evidence="1">
    <location>
        <position position="295"/>
    </location>
    <ligand>
        <name>S-adenosyl-L-methionine</name>
        <dbReference type="ChEBI" id="CHEBI:59789"/>
    </ligand>
</feature>
<feature type="disulfide bond" description="(transient)" evidence="1">
    <location>
        <begin position="108"/>
        <end position="338"/>
    </location>
</feature>
<accession>A0LBZ1</accession>
<proteinExistence type="inferred from homology"/>